<accession>Q7NFF1</accession>
<proteinExistence type="inferred from homology"/>
<comment type="similarity">
    <text evidence="1">Belongs to the bacterial ribosomal protein bL36 family.</text>
</comment>
<reference key="1">
    <citation type="journal article" date="2003" name="DNA Res.">
        <title>Complete genome structure of Gloeobacter violaceus PCC 7421, a cyanobacterium that lacks thylakoids.</title>
        <authorList>
            <person name="Nakamura Y."/>
            <person name="Kaneko T."/>
            <person name="Sato S."/>
            <person name="Mimuro M."/>
            <person name="Miyashita H."/>
            <person name="Tsuchiya T."/>
            <person name="Sasamoto S."/>
            <person name="Watanabe A."/>
            <person name="Kawashima K."/>
            <person name="Kishida Y."/>
            <person name="Kiyokawa C."/>
            <person name="Kohara M."/>
            <person name="Matsumoto M."/>
            <person name="Matsuno A."/>
            <person name="Nakazaki N."/>
            <person name="Shimpo S."/>
            <person name="Takeuchi C."/>
            <person name="Yamada M."/>
            <person name="Tabata S."/>
        </authorList>
    </citation>
    <scope>NUCLEOTIDE SEQUENCE [LARGE SCALE GENOMIC DNA]</scope>
    <source>
        <strain>ATCC 29082 / PCC 7421</strain>
    </source>
</reference>
<dbReference type="EMBL" id="BA000045">
    <property type="protein sequence ID" value="BAC91516.1"/>
    <property type="molecule type" value="Genomic_DNA"/>
</dbReference>
<dbReference type="RefSeq" id="NP_926521.1">
    <property type="nucleotide sequence ID" value="NC_005125.1"/>
</dbReference>
<dbReference type="RefSeq" id="WP_011143564.1">
    <property type="nucleotide sequence ID" value="NC_005125.1"/>
</dbReference>
<dbReference type="SMR" id="Q7NFF1"/>
<dbReference type="FunCoup" id="Q7NFF1">
    <property type="interactions" value="67"/>
</dbReference>
<dbReference type="STRING" id="251221.gene:10761090"/>
<dbReference type="EnsemblBacteria" id="BAC91516">
    <property type="protein sequence ID" value="BAC91516"/>
    <property type="gene ID" value="BAC91516"/>
</dbReference>
<dbReference type="KEGG" id="gvi:gsl3575"/>
<dbReference type="PATRIC" id="fig|251221.4.peg.3608"/>
<dbReference type="eggNOG" id="COG0257">
    <property type="taxonomic scope" value="Bacteria"/>
</dbReference>
<dbReference type="HOGENOM" id="CLU_135723_6_2_3"/>
<dbReference type="InParanoid" id="Q7NFF1"/>
<dbReference type="OrthoDB" id="9802520at2"/>
<dbReference type="PhylomeDB" id="Q7NFF1"/>
<dbReference type="Proteomes" id="UP000000557">
    <property type="component" value="Chromosome"/>
</dbReference>
<dbReference type="GO" id="GO:0005737">
    <property type="term" value="C:cytoplasm"/>
    <property type="evidence" value="ECO:0007669"/>
    <property type="project" value="UniProtKB-ARBA"/>
</dbReference>
<dbReference type="GO" id="GO:1990904">
    <property type="term" value="C:ribonucleoprotein complex"/>
    <property type="evidence" value="ECO:0007669"/>
    <property type="project" value="UniProtKB-KW"/>
</dbReference>
<dbReference type="GO" id="GO:0005840">
    <property type="term" value="C:ribosome"/>
    <property type="evidence" value="ECO:0007669"/>
    <property type="project" value="UniProtKB-KW"/>
</dbReference>
<dbReference type="GO" id="GO:0003735">
    <property type="term" value="F:structural constituent of ribosome"/>
    <property type="evidence" value="ECO:0007669"/>
    <property type="project" value="InterPro"/>
</dbReference>
<dbReference type="GO" id="GO:0006412">
    <property type="term" value="P:translation"/>
    <property type="evidence" value="ECO:0007669"/>
    <property type="project" value="UniProtKB-UniRule"/>
</dbReference>
<dbReference type="HAMAP" id="MF_00251">
    <property type="entry name" value="Ribosomal_bL36"/>
    <property type="match status" value="1"/>
</dbReference>
<dbReference type="InterPro" id="IPR000473">
    <property type="entry name" value="Ribosomal_bL36"/>
</dbReference>
<dbReference type="InterPro" id="IPR035977">
    <property type="entry name" value="Ribosomal_bL36_sp"/>
</dbReference>
<dbReference type="NCBIfam" id="TIGR01022">
    <property type="entry name" value="rpmJ_bact"/>
    <property type="match status" value="1"/>
</dbReference>
<dbReference type="PANTHER" id="PTHR42888">
    <property type="entry name" value="50S RIBOSOMAL PROTEIN L36, CHLOROPLASTIC"/>
    <property type="match status" value="1"/>
</dbReference>
<dbReference type="PANTHER" id="PTHR42888:SF1">
    <property type="entry name" value="LARGE RIBOSOMAL SUBUNIT PROTEIN BL36C"/>
    <property type="match status" value="1"/>
</dbReference>
<dbReference type="Pfam" id="PF00444">
    <property type="entry name" value="Ribosomal_L36"/>
    <property type="match status" value="1"/>
</dbReference>
<dbReference type="SUPFAM" id="SSF57840">
    <property type="entry name" value="Ribosomal protein L36"/>
    <property type="match status" value="1"/>
</dbReference>
<dbReference type="PROSITE" id="PS00828">
    <property type="entry name" value="RIBOSOMAL_L36"/>
    <property type="match status" value="1"/>
</dbReference>
<name>RL36_GLOVI</name>
<organism>
    <name type="scientific">Gloeobacter violaceus (strain ATCC 29082 / PCC 7421)</name>
    <dbReference type="NCBI Taxonomy" id="251221"/>
    <lineage>
        <taxon>Bacteria</taxon>
        <taxon>Bacillati</taxon>
        <taxon>Cyanobacteriota</taxon>
        <taxon>Cyanophyceae</taxon>
        <taxon>Gloeobacterales</taxon>
        <taxon>Gloeobacteraceae</taxon>
        <taxon>Gloeobacter</taxon>
    </lineage>
</organism>
<evidence type="ECO:0000255" key="1">
    <source>
        <dbReference type="HAMAP-Rule" id="MF_00251"/>
    </source>
</evidence>
<evidence type="ECO:0000305" key="2"/>
<keyword id="KW-1185">Reference proteome</keyword>
<keyword id="KW-0687">Ribonucleoprotein</keyword>
<keyword id="KW-0689">Ribosomal protein</keyword>
<protein>
    <recommendedName>
        <fullName evidence="1">Large ribosomal subunit protein bL36</fullName>
    </recommendedName>
    <alternativeName>
        <fullName evidence="2">50S ribosomal protein L36</fullName>
    </alternativeName>
</protein>
<feature type="chain" id="PRO_0000126190" description="Large ribosomal subunit protein bL36">
    <location>
        <begin position="1"/>
        <end position="37"/>
    </location>
</feature>
<gene>
    <name evidence="1" type="primary">rpmJ</name>
    <name type="synonym">rpl36</name>
    <name type="ordered locus">gsl3575</name>
</gene>
<sequence length="37" mass="4363">MKVRASVKPICEKCRVIRRKGRVMVICENPKHKQRQG</sequence>